<organism>
    <name type="scientific">Yersinia pestis bv. Antiqua (strain Angola)</name>
    <dbReference type="NCBI Taxonomy" id="349746"/>
    <lineage>
        <taxon>Bacteria</taxon>
        <taxon>Pseudomonadati</taxon>
        <taxon>Pseudomonadota</taxon>
        <taxon>Gammaproteobacteria</taxon>
        <taxon>Enterobacterales</taxon>
        <taxon>Yersiniaceae</taxon>
        <taxon>Yersinia</taxon>
    </lineage>
</organism>
<keyword id="KW-0997">Cell inner membrane</keyword>
<keyword id="KW-1003">Cell membrane</keyword>
<keyword id="KW-0406">Ion transport</keyword>
<keyword id="KW-0464">Manganese</keyword>
<keyword id="KW-0472">Membrane</keyword>
<keyword id="KW-0812">Transmembrane</keyword>
<keyword id="KW-1133">Transmembrane helix</keyword>
<keyword id="KW-0813">Transport</keyword>
<evidence type="ECO:0000255" key="1">
    <source>
        <dbReference type="HAMAP-Rule" id="MF_01521"/>
    </source>
</evidence>
<proteinExistence type="inferred from homology"/>
<protein>
    <recommendedName>
        <fullName evidence="1">Putative manganese efflux pump MntP</fullName>
    </recommendedName>
</protein>
<accession>A9R5Y7</accession>
<dbReference type="EMBL" id="CP000901">
    <property type="protein sequence ID" value="ABX85210.1"/>
    <property type="molecule type" value="Genomic_DNA"/>
</dbReference>
<dbReference type="RefSeq" id="WP_002211065.1">
    <property type="nucleotide sequence ID" value="NZ_CP009935.1"/>
</dbReference>
<dbReference type="GeneID" id="57976826"/>
<dbReference type="KEGG" id="ypg:YpAngola_A1655"/>
<dbReference type="PATRIC" id="fig|349746.12.peg.2625"/>
<dbReference type="GO" id="GO:0005886">
    <property type="term" value="C:plasma membrane"/>
    <property type="evidence" value="ECO:0007669"/>
    <property type="project" value="UniProtKB-SubCell"/>
</dbReference>
<dbReference type="GO" id="GO:0005384">
    <property type="term" value="F:manganese ion transmembrane transporter activity"/>
    <property type="evidence" value="ECO:0007669"/>
    <property type="project" value="UniProtKB-UniRule"/>
</dbReference>
<dbReference type="HAMAP" id="MF_01521">
    <property type="entry name" value="MntP_pump"/>
    <property type="match status" value="1"/>
</dbReference>
<dbReference type="InterPro" id="IPR003810">
    <property type="entry name" value="Mntp/YtaF"/>
</dbReference>
<dbReference type="InterPro" id="IPR022929">
    <property type="entry name" value="Put_MntP"/>
</dbReference>
<dbReference type="NCBIfam" id="NF008546">
    <property type="entry name" value="PRK11469.1"/>
    <property type="match status" value="1"/>
</dbReference>
<dbReference type="PANTHER" id="PTHR35529">
    <property type="entry name" value="MANGANESE EFFLUX PUMP MNTP-RELATED"/>
    <property type="match status" value="1"/>
</dbReference>
<dbReference type="PANTHER" id="PTHR35529:SF1">
    <property type="entry name" value="MANGANESE EFFLUX PUMP MNTP-RELATED"/>
    <property type="match status" value="1"/>
</dbReference>
<dbReference type="Pfam" id="PF02659">
    <property type="entry name" value="Mntp"/>
    <property type="match status" value="1"/>
</dbReference>
<comment type="function">
    <text evidence="1">Probably functions as a manganese efflux pump.</text>
</comment>
<comment type="subcellular location">
    <subcellularLocation>
        <location evidence="1">Cell inner membrane</location>
        <topology evidence="1">Multi-pass membrane protein</topology>
    </subcellularLocation>
</comment>
<comment type="similarity">
    <text evidence="1">Belongs to the MntP (TC 9.B.29) family.</text>
</comment>
<feature type="chain" id="PRO_1000200049" description="Putative manganese efflux pump MntP">
    <location>
        <begin position="1"/>
        <end position="189"/>
    </location>
</feature>
<feature type="transmembrane region" description="Helical" evidence="1">
    <location>
        <begin position="3"/>
        <end position="23"/>
    </location>
</feature>
<feature type="transmembrane region" description="Helical" evidence="1">
    <location>
        <begin position="41"/>
        <end position="61"/>
    </location>
</feature>
<feature type="transmembrane region" description="Helical" evidence="1">
    <location>
        <begin position="65"/>
        <end position="85"/>
    </location>
</feature>
<feature type="transmembrane region" description="Helical" evidence="1">
    <location>
        <begin position="104"/>
        <end position="124"/>
    </location>
</feature>
<feature type="transmembrane region" description="Helical" evidence="1">
    <location>
        <begin position="132"/>
        <end position="152"/>
    </location>
</feature>
<feature type="transmembrane region" description="Helical" evidence="1">
    <location>
        <begin position="167"/>
        <end position="187"/>
    </location>
</feature>
<sequence>MNLSATIILAFAMSMDAFAASIGKGATLYKPRFREALRTGLIFGVIEAITPLIGWCIGLFASQYIMEWDHWIAFSLLFILGCRMIFEGMKQRVAETEKMRSHSFWVLVTTAIATSLDAMAIGVGLAFLQVDIVHTAMAIGLATMIMATLGMLIGRYIGPLLGKRAEIIGGIVLIGIGFNILYEHMHLTA</sequence>
<name>MNTP_YERPG</name>
<reference key="1">
    <citation type="journal article" date="2010" name="J. Bacteriol.">
        <title>Genome sequence of the deep-rooted Yersinia pestis strain Angola reveals new insights into the evolution and pangenome of the plague bacterium.</title>
        <authorList>
            <person name="Eppinger M."/>
            <person name="Worsham P.L."/>
            <person name="Nikolich M.P."/>
            <person name="Riley D.R."/>
            <person name="Sebastian Y."/>
            <person name="Mou S."/>
            <person name="Achtman M."/>
            <person name="Lindler L.E."/>
            <person name="Ravel J."/>
        </authorList>
    </citation>
    <scope>NUCLEOTIDE SEQUENCE [LARGE SCALE GENOMIC DNA]</scope>
    <source>
        <strain>Angola</strain>
    </source>
</reference>
<gene>
    <name evidence="1" type="primary">mntP</name>
    <name type="ordered locus">YpAngola_A1655</name>
</gene>